<keyword id="KW-0433">Leucine-rich repeat</keyword>
<keyword id="KW-0597">Phosphoprotein</keyword>
<keyword id="KW-1185">Reference proteome</keyword>
<keyword id="KW-0677">Repeat</keyword>
<gene>
    <name type="primary">Lrrc58</name>
</gene>
<proteinExistence type="evidence at transcript level"/>
<name>LRC58_MOUSE</name>
<dbReference type="EMBL" id="AK049274">
    <property type="protein sequence ID" value="BAC33650.1"/>
    <property type="molecule type" value="mRNA"/>
</dbReference>
<dbReference type="EMBL" id="AK147818">
    <property type="protein sequence ID" value="BAE28158.1"/>
    <property type="molecule type" value="mRNA"/>
</dbReference>
<dbReference type="EMBL" id="BC141007">
    <property type="protein sequence ID" value="AAI41008.1"/>
    <property type="molecule type" value="mRNA"/>
</dbReference>
<dbReference type="CCDS" id="CCDS37340.1"/>
<dbReference type="RefSeq" id="NP_796067.2">
    <property type="nucleotide sequence ID" value="NM_177093.3"/>
</dbReference>
<dbReference type="SMR" id="Q3UGP9"/>
<dbReference type="BioGRID" id="235824">
    <property type="interactions" value="1"/>
</dbReference>
<dbReference type="FunCoup" id="Q3UGP9">
    <property type="interactions" value="73"/>
</dbReference>
<dbReference type="STRING" id="10090.ENSMUSP00000077779"/>
<dbReference type="GlyGen" id="Q3UGP9">
    <property type="glycosylation" value="1 site, 1 N-linked glycan (1 site)"/>
</dbReference>
<dbReference type="iPTMnet" id="Q3UGP9"/>
<dbReference type="PhosphoSitePlus" id="Q3UGP9"/>
<dbReference type="PaxDb" id="10090-ENSMUSP00000077779"/>
<dbReference type="PeptideAtlas" id="Q3UGP9"/>
<dbReference type="ProteomicsDB" id="292356"/>
<dbReference type="Pumba" id="Q3UGP9"/>
<dbReference type="Antibodypedia" id="58235">
    <property type="antibodies" value="18 antibodies from 11 providers"/>
</dbReference>
<dbReference type="DNASU" id="320184"/>
<dbReference type="Ensembl" id="ENSMUST00000078717.7">
    <property type="protein sequence ID" value="ENSMUSP00000077779.7"/>
    <property type="gene ID" value="ENSMUSG00000034158.10"/>
</dbReference>
<dbReference type="GeneID" id="320184"/>
<dbReference type="KEGG" id="mmu:320184"/>
<dbReference type="UCSC" id="uc007zek.1">
    <property type="organism name" value="mouse"/>
</dbReference>
<dbReference type="AGR" id="MGI:2443542"/>
<dbReference type="CTD" id="116064"/>
<dbReference type="MGI" id="MGI:2443542">
    <property type="gene designation" value="Lrrc58"/>
</dbReference>
<dbReference type="VEuPathDB" id="HostDB:ENSMUSG00000034158"/>
<dbReference type="eggNOG" id="KOG0619">
    <property type="taxonomic scope" value="Eukaryota"/>
</dbReference>
<dbReference type="GeneTree" id="ENSGT00940000156556"/>
<dbReference type="HOGENOM" id="CLU_000288_18_2_1"/>
<dbReference type="InParanoid" id="Q3UGP9"/>
<dbReference type="OMA" id="GLSQWFP"/>
<dbReference type="OrthoDB" id="1053178at2759"/>
<dbReference type="PhylomeDB" id="Q3UGP9"/>
<dbReference type="TreeFam" id="TF351911"/>
<dbReference type="BioGRID-ORCS" id="320184">
    <property type="hits" value="3 hits in 76 CRISPR screens"/>
</dbReference>
<dbReference type="ChiTaRS" id="Lrrc58">
    <property type="organism name" value="mouse"/>
</dbReference>
<dbReference type="PRO" id="PR:Q3UGP9"/>
<dbReference type="Proteomes" id="UP000000589">
    <property type="component" value="Chromosome 16"/>
</dbReference>
<dbReference type="RNAct" id="Q3UGP9">
    <property type="molecule type" value="protein"/>
</dbReference>
<dbReference type="Bgee" id="ENSMUSG00000034158">
    <property type="expression patterns" value="Expressed in gonadal ridge and 255 other cell types or tissues"/>
</dbReference>
<dbReference type="Gene3D" id="3.80.10.10">
    <property type="entry name" value="Ribonuclease Inhibitor"/>
    <property type="match status" value="2"/>
</dbReference>
<dbReference type="InterPro" id="IPR001611">
    <property type="entry name" value="Leu-rich_rpt"/>
</dbReference>
<dbReference type="InterPro" id="IPR003591">
    <property type="entry name" value="Leu-rich_rpt_typical-subtyp"/>
</dbReference>
<dbReference type="InterPro" id="IPR050715">
    <property type="entry name" value="LRR-SigEffector_domain"/>
</dbReference>
<dbReference type="InterPro" id="IPR032675">
    <property type="entry name" value="LRR_dom_sf"/>
</dbReference>
<dbReference type="PANTHER" id="PTHR45752:SF187">
    <property type="entry name" value="LEUCINE-RICH REPEAT AND IQ DOMAIN-CONTAINING PROTEIN 4"/>
    <property type="match status" value="1"/>
</dbReference>
<dbReference type="PANTHER" id="PTHR45752">
    <property type="entry name" value="LEUCINE-RICH REPEAT-CONTAINING"/>
    <property type="match status" value="1"/>
</dbReference>
<dbReference type="Pfam" id="PF13855">
    <property type="entry name" value="LRR_8"/>
    <property type="match status" value="3"/>
</dbReference>
<dbReference type="SMART" id="SM00364">
    <property type="entry name" value="LRR_BAC"/>
    <property type="match status" value="6"/>
</dbReference>
<dbReference type="SMART" id="SM00369">
    <property type="entry name" value="LRR_TYP"/>
    <property type="match status" value="7"/>
</dbReference>
<dbReference type="SUPFAM" id="SSF52058">
    <property type="entry name" value="L domain-like"/>
    <property type="match status" value="1"/>
</dbReference>
<dbReference type="PROSITE" id="PS51450">
    <property type="entry name" value="LRR"/>
    <property type="match status" value="8"/>
</dbReference>
<protein>
    <recommendedName>
        <fullName>Leucine-rich repeat-containing protein 58</fullName>
    </recommendedName>
</protein>
<organism>
    <name type="scientific">Mus musculus</name>
    <name type="common">Mouse</name>
    <dbReference type="NCBI Taxonomy" id="10090"/>
    <lineage>
        <taxon>Eukaryota</taxon>
        <taxon>Metazoa</taxon>
        <taxon>Chordata</taxon>
        <taxon>Craniata</taxon>
        <taxon>Vertebrata</taxon>
        <taxon>Euteleostomi</taxon>
        <taxon>Mammalia</taxon>
        <taxon>Eutheria</taxon>
        <taxon>Euarchontoglires</taxon>
        <taxon>Glires</taxon>
        <taxon>Rodentia</taxon>
        <taxon>Myomorpha</taxon>
        <taxon>Muroidea</taxon>
        <taxon>Muridae</taxon>
        <taxon>Murinae</taxon>
        <taxon>Mus</taxon>
        <taxon>Mus</taxon>
    </lineage>
</organism>
<reference key="1">
    <citation type="journal article" date="2005" name="Science">
        <title>The transcriptional landscape of the mammalian genome.</title>
        <authorList>
            <person name="Carninci P."/>
            <person name="Kasukawa T."/>
            <person name="Katayama S."/>
            <person name="Gough J."/>
            <person name="Frith M.C."/>
            <person name="Maeda N."/>
            <person name="Oyama R."/>
            <person name="Ravasi T."/>
            <person name="Lenhard B."/>
            <person name="Wells C."/>
            <person name="Kodzius R."/>
            <person name="Shimokawa K."/>
            <person name="Bajic V.B."/>
            <person name="Brenner S.E."/>
            <person name="Batalov S."/>
            <person name="Forrest A.R."/>
            <person name="Zavolan M."/>
            <person name="Davis M.J."/>
            <person name="Wilming L.G."/>
            <person name="Aidinis V."/>
            <person name="Allen J.E."/>
            <person name="Ambesi-Impiombato A."/>
            <person name="Apweiler R."/>
            <person name="Aturaliya R.N."/>
            <person name="Bailey T.L."/>
            <person name="Bansal M."/>
            <person name="Baxter L."/>
            <person name="Beisel K.W."/>
            <person name="Bersano T."/>
            <person name="Bono H."/>
            <person name="Chalk A.M."/>
            <person name="Chiu K.P."/>
            <person name="Choudhary V."/>
            <person name="Christoffels A."/>
            <person name="Clutterbuck D.R."/>
            <person name="Crowe M.L."/>
            <person name="Dalla E."/>
            <person name="Dalrymple B.P."/>
            <person name="de Bono B."/>
            <person name="Della Gatta G."/>
            <person name="di Bernardo D."/>
            <person name="Down T."/>
            <person name="Engstrom P."/>
            <person name="Fagiolini M."/>
            <person name="Faulkner G."/>
            <person name="Fletcher C.F."/>
            <person name="Fukushima T."/>
            <person name="Furuno M."/>
            <person name="Futaki S."/>
            <person name="Gariboldi M."/>
            <person name="Georgii-Hemming P."/>
            <person name="Gingeras T.R."/>
            <person name="Gojobori T."/>
            <person name="Green R.E."/>
            <person name="Gustincich S."/>
            <person name="Harbers M."/>
            <person name="Hayashi Y."/>
            <person name="Hensch T.K."/>
            <person name="Hirokawa N."/>
            <person name="Hill D."/>
            <person name="Huminiecki L."/>
            <person name="Iacono M."/>
            <person name="Ikeo K."/>
            <person name="Iwama A."/>
            <person name="Ishikawa T."/>
            <person name="Jakt M."/>
            <person name="Kanapin A."/>
            <person name="Katoh M."/>
            <person name="Kawasawa Y."/>
            <person name="Kelso J."/>
            <person name="Kitamura H."/>
            <person name="Kitano H."/>
            <person name="Kollias G."/>
            <person name="Krishnan S.P."/>
            <person name="Kruger A."/>
            <person name="Kummerfeld S.K."/>
            <person name="Kurochkin I.V."/>
            <person name="Lareau L.F."/>
            <person name="Lazarevic D."/>
            <person name="Lipovich L."/>
            <person name="Liu J."/>
            <person name="Liuni S."/>
            <person name="McWilliam S."/>
            <person name="Madan Babu M."/>
            <person name="Madera M."/>
            <person name="Marchionni L."/>
            <person name="Matsuda H."/>
            <person name="Matsuzawa S."/>
            <person name="Miki H."/>
            <person name="Mignone F."/>
            <person name="Miyake S."/>
            <person name="Morris K."/>
            <person name="Mottagui-Tabar S."/>
            <person name="Mulder N."/>
            <person name="Nakano N."/>
            <person name="Nakauchi H."/>
            <person name="Ng P."/>
            <person name="Nilsson R."/>
            <person name="Nishiguchi S."/>
            <person name="Nishikawa S."/>
            <person name="Nori F."/>
            <person name="Ohara O."/>
            <person name="Okazaki Y."/>
            <person name="Orlando V."/>
            <person name="Pang K.C."/>
            <person name="Pavan W.J."/>
            <person name="Pavesi G."/>
            <person name="Pesole G."/>
            <person name="Petrovsky N."/>
            <person name="Piazza S."/>
            <person name="Reed J."/>
            <person name="Reid J.F."/>
            <person name="Ring B.Z."/>
            <person name="Ringwald M."/>
            <person name="Rost B."/>
            <person name="Ruan Y."/>
            <person name="Salzberg S.L."/>
            <person name="Sandelin A."/>
            <person name="Schneider C."/>
            <person name="Schoenbach C."/>
            <person name="Sekiguchi K."/>
            <person name="Semple C.A."/>
            <person name="Seno S."/>
            <person name="Sessa L."/>
            <person name="Sheng Y."/>
            <person name="Shibata Y."/>
            <person name="Shimada H."/>
            <person name="Shimada K."/>
            <person name="Silva D."/>
            <person name="Sinclair B."/>
            <person name="Sperling S."/>
            <person name="Stupka E."/>
            <person name="Sugiura K."/>
            <person name="Sultana R."/>
            <person name="Takenaka Y."/>
            <person name="Taki K."/>
            <person name="Tammoja K."/>
            <person name="Tan S.L."/>
            <person name="Tang S."/>
            <person name="Taylor M.S."/>
            <person name="Tegner J."/>
            <person name="Teichmann S.A."/>
            <person name="Ueda H.R."/>
            <person name="van Nimwegen E."/>
            <person name="Verardo R."/>
            <person name="Wei C.L."/>
            <person name="Yagi K."/>
            <person name="Yamanishi H."/>
            <person name="Zabarovsky E."/>
            <person name="Zhu S."/>
            <person name="Zimmer A."/>
            <person name="Hide W."/>
            <person name="Bult C."/>
            <person name="Grimmond S.M."/>
            <person name="Teasdale R.D."/>
            <person name="Liu E.T."/>
            <person name="Brusic V."/>
            <person name="Quackenbush J."/>
            <person name="Wahlestedt C."/>
            <person name="Mattick J.S."/>
            <person name="Hume D.A."/>
            <person name="Kai C."/>
            <person name="Sasaki D."/>
            <person name="Tomaru Y."/>
            <person name="Fukuda S."/>
            <person name="Kanamori-Katayama M."/>
            <person name="Suzuki M."/>
            <person name="Aoki J."/>
            <person name="Arakawa T."/>
            <person name="Iida J."/>
            <person name="Imamura K."/>
            <person name="Itoh M."/>
            <person name="Kato T."/>
            <person name="Kawaji H."/>
            <person name="Kawagashira N."/>
            <person name="Kawashima T."/>
            <person name="Kojima M."/>
            <person name="Kondo S."/>
            <person name="Konno H."/>
            <person name="Nakano K."/>
            <person name="Ninomiya N."/>
            <person name="Nishio T."/>
            <person name="Okada M."/>
            <person name="Plessy C."/>
            <person name="Shibata K."/>
            <person name="Shiraki T."/>
            <person name="Suzuki S."/>
            <person name="Tagami M."/>
            <person name="Waki K."/>
            <person name="Watahiki A."/>
            <person name="Okamura-Oho Y."/>
            <person name="Suzuki H."/>
            <person name="Kawai J."/>
            <person name="Hayashizaki Y."/>
        </authorList>
    </citation>
    <scope>NUCLEOTIDE SEQUENCE [LARGE SCALE MRNA]</scope>
    <source>
        <strain>C57BL/6J</strain>
    </source>
</reference>
<reference key="2">
    <citation type="journal article" date="2004" name="Genome Res.">
        <title>The status, quality, and expansion of the NIH full-length cDNA project: the Mammalian Gene Collection (MGC).</title>
        <authorList>
            <consortium name="The MGC Project Team"/>
        </authorList>
    </citation>
    <scope>NUCLEOTIDE SEQUENCE [LARGE SCALE MRNA]</scope>
    <source>
        <tissue>Brain</tissue>
    </source>
</reference>
<sequence>MEEAALGEAELNWSRLSVSAEALESELEARAEERRGAREALLRLLLPYNRLTSLPRALGGGFPHLQLLDVSGNSLTALGPELLTLSGLRTLLARNNRLGGPGSLPKGLAQSPLCRSLQVLNLSGNCFQELPASLLELRALQTLSLGGNQLQSIPAEIENLRSLECLYLGGNFIKEIPPELANLPSLNYLVLCDNKIQSVPPQLSQLHSLRSLSLHNNLLTYLPREILNLIHLEELSLRGNPLVVRFVRDLTYDPPTLLELAARTIKIRSISYTPYDLPGNLLRYLGSASNCPNPKCGGVYFDCCVRQIKFVDFCGKYRLPLMHYLCSPECSSPCSSASHSSTSQSESDSEDEASVAAHRMQKVLLG</sequence>
<accession>Q3UGP9</accession>
<accession>B2RU81</accession>
<accession>Q8BX06</accession>
<feature type="chain" id="PRO_0000312018" description="Leucine-rich repeat-containing protein 58">
    <location>
        <begin position="1"/>
        <end position="366"/>
    </location>
</feature>
<feature type="repeat" description="LRR 1">
    <location>
        <begin position="40"/>
        <end position="61"/>
    </location>
</feature>
<feature type="repeat" description="LRR 2">
    <location>
        <begin position="64"/>
        <end position="86"/>
    </location>
</feature>
<feature type="repeat" description="LRR 3">
    <location>
        <begin position="87"/>
        <end position="108"/>
    </location>
</feature>
<feature type="repeat" description="LRR 4">
    <location>
        <begin position="116"/>
        <end position="138"/>
    </location>
</feature>
<feature type="repeat" description="LRR 5">
    <location>
        <begin position="139"/>
        <end position="161"/>
    </location>
</feature>
<feature type="repeat" description="LRR 6">
    <location>
        <begin position="162"/>
        <end position="184"/>
    </location>
</feature>
<feature type="repeat" description="LRR 7">
    <location>
        <begin position="185"/>
        <end position="206"/>
    </location>
</feature>
<feature type="repeat" description="LRR 8">
    <location>
        <begin position="208"/>
        <end position="229"/>
    </location>
</feature>
<feature type="repeat" description="LRR 9">
    <location>
        <begin position="231"/>
        <end position="251"/>
    </location>
</feature>
<feature type="region of interest" description="Disordered" evidence="2">
    <location>
        <begin position="337"/>
        <end position="356"/>
    </location>
</feature>
<feature type="compositionally biased region" description="Low complexity" evidence="2">
    <location>
        <begin position="337"/>
        <end position="346"/>
    </location>
</feature>
<feature type="modified residue" description="Phosphoserine" evidence="1">
    <location>
        <position position="19"/>
    </location>
</feature>
<feature type="sequence conflict" description="In Ref. 1; BAC33650." evidence="3" ref="1">
    <original>N</original>
    <variation>S</variation>
    <location>
        <position position="125"/>
    </location>
</feature>
<evidence type="ECO:0000250" key="1">
    <source>
        <dbReference type="UniProtKB" id="Q96CX6"/>
    </source>
</evidence>
<evidence type="ECO:0000256" key="2">
    <source>
        <dbReference type="SAM" id="MobiDB-lite"/>
    </source>
</evidence>
<evidence type="ECO:0000305" key="3"/>